<feature type="chain" id="PRO_0000124805" description="Heat shock factor-binding protein 1">
    <location>
        <begin position="1"/>
        <end position="76"/>
    </location>
</feature>
<feature type="mutagenesis site" description="Loss of interaction with HSF1; in association with K-19." evidence="2">
    <original>V</original>
    <variation>K</variation>
    <location>
        <position position="16"/>
    </location>
</feature>
<feature type="mutagenesis site" description="Loss of interaction with HSF1; in association with K-16." evidence="2">
    <original>L</original>
    <variation>K</variation>
    <location>
        <position position="19"/>
    </location>
</feature>
<feature type="mutagenesis site" description="Loss of interaction with HSF1; in association with K-48." evidence="2">
    <original>I</original>
    <variation>K</variation>
    <location>
        <position position="45"/>
    </location>
</feature>
<feature type="mutagenesis site" description="Loss of interaction with HSF1; in association with K-45." evidence="2">
    <original>L</original>
    <variation>K</variation>
    <location>
        <position position="48"/>
    </location>
</feature>
<feature type="sequence conflict" description="In Ref. 2; AAP73809." evidence="3" ref="2">
    <original>S</original>
    <variation>A</variation>
    <location>
        <position position="31"/>
    </location>
</feature>
<feature type="sequence conflict" description="In Ref. 2; AAP73809." evidence="3" ref="2">
    <original>A</original>
    <variation>V</variation>
    <location>
        <position position="72"/>
    </location>
</feature>
<feature type="helix" evidence="4">
    <location>
        <begin position="9"/>
        <end position="46"/>
    </location>
</feature>
<gene>
    <name type="primary">HSBP1</name>
    <name type="synonym">HSF1BP</name>
</gene>
<reference key="1">
    <citation type="journal article" date="1998" name="Genes Dev.">
        <title>Negative regulation of the heat shock transcriptional response by HSBP1.</title>
        <authorList>
            <person name="Satyal S.H."/>
            <person name="Chen D."/>
            <person name="Fox S.G."/>
            <person name="Kramer J.M."/>
            <person name="Morimoto R.I."/>
        </authorList>
    </citation>
    <scope>NUCLEOTIDE SEQUENCE [MRNA]</scope>
    <scope>MUTAGENESIS</scope>
</reference>
<reference key="2">
    <citation type="submission" date="2003-06" db="EMBL/GenBank/DDBJ databases">
        <title>Construction of cDNA expression library from nasopharyngeal carcinoma tissue and screening of antigenic genes.</title>
        <authorList>
            <person name="Shu J."/>
            <person name="Li G."/>
            <person name="He X."/>
        </authorList>
    </citation>
    <scope>NUCLEOTIDE SEQUENCE [MRNA]</scope>
</reference>
<reference key="3">
    <citation type="journal article" date="2007" name="BMC Genomics">
        <title>The full-ORF clone resource of the German cDNA consortium.</title>
        <authorList>
            <person name="Bechtel S."/>
            <person name="Rosenfelder H."/>
            <person name="Duda A."/>
            <person name="Schmidt C.P."/>
            <person name="Ernst U."/>
            <person name="Wellenreuther R."/>
            <person name="Mehrle A."/>
            <person name="Schuster C."/>
            <person name="Bahr A."/>
            <person name="Bloecker H."/>
            <person name="Heubner D."/>
            <person name="Hoerlein A."/>
            <person name="Michel G."/>
            <person name="Wedler H."/>
            <person name="Koehrer K."/>
            <person name="Ottenwaelder B."/>
            <person name="Poustka A."/>
            <person name="Wiemann S."/>
            <person name="Schupp I."/>
        </authorList>
    </citation>
    <scope>NUCLEOTIDE SEQUENCE [LARGE SCALE MRNA]</scope>
    <source>
        <tissue>Fetal brain</tissue>
    </source>
</reference>
<reference key="4">
    <citation type="journal article" date="2004" name="Genome Res.">
        <title>The status, quality, and expansion of the NIH full-length cDNA project: the Mammalian Gene Collection (MGC).</title>
        <authorList>
            <consortium name="The MGC Project Team"/>
        </authorList>
    </citation>
    <scope>NUCLEOTIDE SEQUENCE [LARGE SCALE MRNA]</scope>
    <source>
        <tissue>Muscle</tissue>
    </source>
</reference>
<reference key="5">
    <citation type="journal article" date="2003" name="Nature">
        <title>Proteomic characterization of the human centrosome by protein correlation profiling.</title>
        <authorList>
            <person name="Andersen J.S."/>
            <person name="Wilkinson C.J."/>
            <person name="Mayor T."/>
            <person name="Mortensen P."/>
            <person name="Nigg E.A."/>
            <person name="Mann M."/>
        </authorList>
    </citation>
    <scope>IDENTIFICATION BY MASS SPECTROMETRY</scope>
    <source>
        <tissue>Lymphoblast</tissue>
    </source>
</reference>
<reference key="6">
    <citation type="journal article" date="2008" name="Proc. Natl. Acad. Sci. U.S.A.">
        <title>A quantitative atlas of mitotic phosphorylation.</title>
        <authorList>
            <person name="Dephoure N."/>
            <person name="Zhou C."/>
            <person name="Villen J."/>
            <person name="Beausoleil S.A."/>
            <person name="Bakalarski C.E."/>
            <person name="Elledge S.J."/>
            <person name="Gygi S.P."/>
        </authorList>
    </citation>
    <scope>IDENTIFICATION BY MASS SPECTROMETRY [LARGE SCALE ANALYSIS]</scope>
    <source>
        <tissue>Cervix carcinoma</tissue>
    </source>
</reference>
<reference key="7">
    <citation type="journal article" date="2009" name="Proteins">
        <title>Crystal structure of the hexamer of human heat shock factor binding protein 1.</title>
        <authorList>
            <person name="Liu X."/>
            <person name="Xu L."/>
            <person name="Liu Y."/>
            <person name="Tong X."/>
            <person name="Zhu G."/>
            <person name="Zhang X.C."/>
            <person name="Li X."/>
            <person name="Rao Z."/>
        </authorList>
    </citation>
    <scope>X-RAY CRYSTALLOGRAPHY (1.8 ANGSTROMS) OF 6-53 OF MUTANT ILE-31 AND PRO-56</scope>
    <scope>SUBUNIT</scope>
</reference>
<organism>
    <name type="scientific">Homo sapiens</name>
    <name type="common">Human</name>
    <dbReference type="NCBI Taxonomy" id="9606"/>
    <lineage>
        <taxon>Eukaryota</taxon>
        <taxon>Metazoa</taxon>
        <taxon>Chordata</taxon>
        <taxon>Craniata</taxon>
        <taxon>Vertebrata</taxon>
        <taxon>Euteleostomi</taxon>
        <taxon>Mammalia</taxon>
        <taxon>Eutheria</taxon>
        <taxon>Euarchontoglires</taxon>
        <taxon>Primates</taxon>
        <taxon>Haplorrhini</taxon>
        <taxon>Catarrhini</taxon>
        <taxon>Hominidae</taxon>
        <taxon>Homo</taxon>
    </lineage>
</organism>
<keyword id="KW-0002">3D-structure</keyword>
<keyword id="KW-0539">Nucleus</keyword>
<keyword id="KW-1267">Proteomics identification</keyword>
<keyword id="KW-1185">Reference proteome</keyword>
<comment type="function">
    <text>Negative regulator of the heat shock response. Negatively affects HSF1 DNA-binding activity. May have a role in the suppression of the activation of the stress response during the aging process.</text>
</comment>
<comment type="subunit">
    <text evidence="1">Homohexamer. Associates with heptad repeats of HSF1 trimers and probably also HSF1 monomers, and with HSP70. Association with HSF1 trimers and HSP70 coincides with attenuation of heat shock response and the conversion of HSF1 trimer to monomer.</text>
</comment>
<comment type="interaction">
    <interactant intactId="EBI-748664">
        <id>O75506</id>
    </interactant>
    <interactant intactId="EBI-465861">
        <id>Q8TDH9</id>
        <label>BLOC1S5</label>
    </interactant>
    <organismsDiffer>false</organismsDiffer>
    <experiments>3</experiments>
</comment>
<comment type="interaction">
    <interactant intactId="EBI-748664">
        <id>O75506</id>
    </interactant>
    <interactant intactId="EBI-2837444">
        <id>Q8WUW1</id>
        <label>BRK1</label>
    </interactant>
    <organismsDiffer>false</organismsDiffer>
    <experiments>8</experiments>
</comment>
<comment type="interaction">
    <interactant intactId="EBI-748664">
        <id>O75506</id>
    </interactant>
    <interactant intactId="EBI-10175300">
        <id>Q8TD31-3</id>
        <label>CCHCR1</label>
    </interactant>
    <organismsDiffer>false</organismsDiffer>
    <experiments>6</experiments>
</comment>
<comment type="interaction">
    <interactant intactId="EBI-748664">
        <id>O75506</id>
    </interactant>
    <interactant intactId="EBI-3867333">
        <id>A8MQ03</id>
        <label>CYSRT1</label>
    </interactant>
    <organismsDiffer>false</organismsDiffer>
    <experiments>3</experiments>
</comment>
<comment type="interaction">
    <interactant intactId="EBI-748664">
        <id>O75506</id>
    </interactant>
    <interactant intactId="EBI-739467">
        <id>Q9H8Y8</id>
        <label>GORASP2</label>
    </interactant>
    <organismsDiffer>false</organismsDiffer>
    <experiments>3</experiments>
</comment>
<comment type="interaction">
    <interactant intactId="EBI-748664">
        <id>O75506</id>
    </interactant>
    <interactant intactId="EBI-748664">
        <id>O75506</id>
        <label>HSBP1</label>
    </interactant>
    <organismsDiffer>false</organismsDiffer>
    <experiments>4</experiments>
</comment>
<comment type="interaction">
    <interactant intactId="EBI-748664">
        <id>O75506</id>
    </interactant>
    <interactant intactId="EBI-10188326">
        <id>Q5T5P2-6</id>
        <label>KIAA1217</label>
    </interactant>
    <organismsDiffer>false</organismsDiffer>
    <experiments>5</experiments>
</comment>
<comment type="interaction">
    <interactant intactId="EBI-748664">
        <id>O75506</id>
    </interactant>
    <interactant intactId="EBI-2125614">
        <id>Q9BVG8</id>
        <label>KIFC3</label>
    </interactant>
    <organismsDiffer>false</organismsDiffer>
    <experiments>5</experiments>
</comment>
<comment type="interaction">
    <interactant intactId="EBI-748664">
        <id>O75506</id>
    </interactant>
    <interactant intactId="EBI-14069005">
        <id>Q9BVG8-5</id>
        <label>KIFC3</label>
    </interactant>
    <organismsDiffer>false</organismsDiffer>
    <experiments>3</experiments>
</comment>
<comment type="interaction">
    <interactant intactId="EBI-748664">
        <id>O75506</id>
    </interactant>
    <interactant intactId="EBI-11959885">
        <id>Q07627</id>
        <label>KRTAP1-1</label>
    </interactant>
    <organismsDiffer>false</organismsDiffer>
    <experiments>3</experiments>
</comment>
<comment type="interaction">
    <interactant intactId="EBI-748664">
        <id>O75506</id>
    </interactant>
    <interactant intactId="EBI-10172290">
        <id>P60409</id>
        <label>KRTAP10-7</label>
    </interactant>
    <organismsDiffer>false</organismsDiffer>
    <experiments>3</experiments>
</comment>
<comment type="interaction">
    <interactant intactId="EBI-748664">
        <id>O75506</id>
    </interactant>
    <interactant intactId="EBI-10172052">
        <id>P60411</id>
        <label>KRTAP10-9</label>
    </interactant>
    <organismsDiffer>false</organismsDiffer>
    <experiments>3</experiments>
</comment>
<comment type="interaction">
    <interactant intactId="EBI-748664">
        <id>O75506</id>
    </interactant>
    <interactant intactId="EBI-739832">
        <id>Q8TBB1</id>
        <label>LNX1</label>
    </interactant>
    <organismsDiffer>false</organismsDiffer>
    <experiments>10</experiments>
</comment>
<comment type="interaction">
    <interactant intactId="EBI-748664">
        <id>O75506</id>
    </interactant>
    <interactant intactId="EBI-2514004">
        <id>Q5T2T1</id>
        <label>MPP7</label>
    </interactant>
    <organismsDiffer>false</organismsDiffer>
    <experiments>3</experiments>
</comment>
<comment type="interaction">
    <interactant intactId="EBI-748664">
        <id>O75506</id>
    </interactant>
    <interactant intactId="EBI-945833">
        <id>Q7Z3S9</id>
        <label>NOTCH2NLA</label>
    </interactant>
    <organismsDiffer>false</organismsDiffer>
    <experiments>4</experiments>
</comment>
<comment type="interaction">
    <interactant intactId="EBI-748664">
        <id>O75506</id>
    </interactant>
    <interactant intactId="EBI-727004">
        <id>O00560</id>
        <label>SDCBP</label>
    </interactant>
    <organismsDiffer>false</organismsDiffer>
    <experiments>8</experiments>
</comment>
<comment type="interaction">
    <interactant intactId="EBI-748664">
        <id>O75506</id>
    </interactant>
    <interactant intactId="EBI-742426">
        <id>Q9H190</id>
        <label>SDCBP2</label>
    </interactant>
    <organismsDiffer>false</organismsDiffer>
    <experiments>3</experiments>
</comment>
<comment type="interaction">
    <interactant intactId="EBI-748664">
        <id>O75506</id>
    </interactant>
    <interactant intactId="EBI-712969">
        <id>Q9Y3C0</id>
        <label>WASHC3</label>
    </interactant>
    <organismsDiffer>false</organismsDiffer>
    <experiments>15</experiments>
</comment>
<comment type="interaction">
    <interactant intactId="EBI-748664">
        <id>O75506</id>
    </interactant>
    <interactant intactId="EBI-739899">
        <id>P24278</id>
        <label>ZBTB25</label>
    </interactant>
    <organismsDiffer>false</organismsDiffer>
    <experiments>3</experiments>
</comment>
<comment type="subcellular location">
    <subcellularLocation>
        <location>Nucleus</location>
    </subcellularLocation>
</comment>
<comment type="similarity">
    <text evidence="3">Belongs to the HSBP1 family.</text>
</comment>
<sequence>MAETDPKTVQDLTSVVQTLLQQMQDKFQTMSDQIIGRIDDMSSRIDDLEKNIADLMTQAGVEELESENKIPATQKS</sequence>
<evidence type="ECO:0000269" key="1">
    <source>
    </source>
</evidence>
<evidence type="ECO:0000269" key="2">
    <source>
    </source>
</evidence>
<evidence type="ECO:0000305" key="3"/>
<evidence type="ECO:0007829" key="4">
    <source>
        <dbReference type="PDB" id="3CI9"/>
    </source>
</evidence>
<name>HSBP1_HUMAN</name>
<proteinExistence type="evidence at protein level"/>
<protein>
    <recommendedName>
        <fullName>Heat shock factor-binding protein 1</fullName>
    </recommendedName>
    <alternativeName>
        <fullName>Nasopharyngeal carcinoma-associated antigen 13</fullName>
        <shortName>NPC-A-13</shortName>
    </alternativeName>
</protein>
<accession>O75506</accession>
<accession>Q53XA8</accession>
<accession>Q7Z5Z3</accession>
<dbReference type="EMBL" id="AF068754">
    <property type="protein sequence ID" value="AAC25186.1"/>
    <property type="molecule type" value="mRNA"/>
</dbReference>
<dbReference type="EMBL" id="AY320409">
    <property type="protein sequence ID" value="AAP73809.1"/>
    <property type="molecule type" value="mRNA"/>
</dbReference>
<dbReference type="EMBL" id="BX537440">
    <property type="protein sequence ID" value="CAD97682.1"/>
    <property type="molecule type" value="mRNA"/>
</dbReference>
<dbReference type="EMBL" id="BC007515">
    <property type="protein sequence ID" value="AAH07515.1"/>
    <property type="molecule type" value="mRNA"/>
</dbReference>
<dbReference type="CCDS" id="CCDS45534.1"/>
<dbReference type="RefSeq" id="NP_001528.1">
    <property type="nucleotide sequence ID" value="NM_001537.4"/>
</dbReference>
<dbReference type="PDB" id="3CI9">
    <property type="method" value="X-ray"/>
    <property type="resolution" value="1.80 A"/>
    <property type="chains" value="A/B=6-53"/>
</dbReference>
<dbReference type="PDBsum" id="3CI9"/>
<dbReference type="SMR" id="O75506"/>
<dbReference type="BioGRID" id="109515">
    <property type="interactions" value="65"/>
</dbReference>
<dbReference type="FunCoup" id="O75506">
    <property type="interactions" value="2403"/>
</dbReference>
<dbReference type="IntAct" id="O75506">
    <property type="interactions" value="56"/>
</dbReference>
<dbReference type="STRING" id="9606.ENSP00000392896"/>
<dbReference type="GlyCosmos" id="O75506">
    <property type="glycosylation" value="2 sites, 1 glycan"/>
</dbReference>
<dbReference type="GlyGen" id="O75506">
    <property type="glycosylation" value="2 sites, 1 O-linked glycan (2 sites)"/>
</dbReference>
<dbReference type="iPTMnet" id="O75506"/>
<dbReference type="MetOSite" id="O75506"/>
<dbReference type="PhosphoSitePlus" id="O75506"/>
<dbReference type="BioMuta" id="HSBP1"/>
<dbReference type="jPOST" id="O75506"/>
<dbReference type="MassIVE" id="O75506"/>
<dbReference type="PaxDb" id="9606-ENSP00000392896"/>
<dbReference type="PeptideAtlas" id="O75506"/>
<dbReference type="ProteomicsDB" id="50056"/>
<dbReference type="Pumba" id="O75506"/>
<dbReference type="TopDownProteomics" id="O75506"/>
<dbReference type="Antibodypedia" id="30517">
    <property type="antibodies" value="109 antibodies from 24 providers"/>
</dbReference>
<dbReference type="DNASU" id="3281"/>
<dbReference type="Ensembl" id="ENST00000433866.7">
    <property type="protein sequence ID" value="ENSP00000392896.2"/>
    <property type="gene ID" value="ENSG00000230989.8"/>
</dbReference>
<dbReference type="Ensembl" id="ENST00000570259.1">
    <property type="protein sequence ID" value="ENSP00000458007.1"/>
    <property type="gene ID" value="ENSG00000230989.8"/>
</dbReference>
<dbReference type="GeneID" id="3281"/>
<dbReference type="KEGG" id="hsa:3281"/>
<dbReference type="MANE-Select" id="ENST00000433866.7">
    <property type="protein sequence ID" value="ENSP00000392896.2"/>
    <property type="RefSeq nucleotide sequence ID" value="NM_001537.4"/>
    <property type="RefSeq protein sequence ID" value="NP_001528.1"/>
</dbReference>
<dbReference type="UCSC" id="uc002fgy.3">
    <property type="organism name" value="human"/>
</dbReference>
<dbReference type="AGR" id="HGNC:5203"/>
<dbReference type="CTD" id="3281"/>
<dbReference type="DisGeNET" id="3281"/>
<dbReference type="GeneCards" id="HSBP1"/>
<dbReference type="HGNC" id="HGNC:5203">
    <property type="gene designation" value="HSBP1"/>
</dbReference>
<dbReference type="HPA" id="ENSG00000230989">
    <property type="expression patterns" value="Low tissue specificity"/>
</dbReference>
<dbReference type="MIM" id="604553">
    <property type="type" value="gene"/>
</dbReference>
<dbReference type="neXtProt" id="NX_O75506"/>
<dbReference type="OpenTargets" id="ENSG00000230989"/>
<dbReference type="PharmGKB" id="PA29475"/>
<dbReference type="VEuPathDB" id="HostDB:ENSG00000230989"/>
<dbReference type="eggNOG" id="KOG4117">
    <property type="taxonomic scope" value="Eukaryota"/>
</dbReference>
<dbReference type="GeneTree" id="ENSGT00390000006293"/>
<dbReference type="HOGENOM" id="CLU_149552_2_0_1"/>
<dbReference type="InParanoid" id="O75506"/>
<dbReference type="OMA" id="MERANMD"/>
<dbReference type="OrthoDB" id="4159489at2759"/>
<dbReference type="PAN-GO" id="O75506">
    <property type="GO annotations" value="3 GO annotations based on evolutionary models"/>
</dbReference>
<dbReference type="PhylomeDB" id="O75506"/>
<dbReference type="TreeFam" id="TF314005"/>
<dbReference type="PathwayCommons" id="O75506"/>
<dbReference type="Reactome" id="R-HSA-3371511">
    <property type="pathway name" value="HSF1 activation"/>
</dbReference>
<dbReference type="Reactome" id="R-HSA-3371568">
    <property type="pathway name" value="Attenuation phase"/>
</dbReference>
<dbReference type="Reactome" id="R-HSA-3371571">
    <property type="pathway name" value="HSF1-dependent transactivation"/>
</dbReference>
<dbReference type="SignaLink" id="O75506"/>
<dbReference type="SIGNOR" id="O75506"/>
<dbReference type="BioGRID-ORCS" id="3281">
    <property type="hits" value="105 hits in 1164 CRISPR screens"/>
</dbReference>
<dbReference type="ChiTaRS" id="HSBP1">
    <property type="organism name" value="human"/>
</dbReference>
<dbReference type="EvolutionaryTrace" id="O75506"/>
<dbReference type="GenomeRNAi" id="3281"/>
<dbReference type="Pharos" id="O75506">
    <property type="development level" value="Tbio"/>
</dbReference>
<dbReference type="PRO" id="PR:O75506"/>
<dbReference type="Proteomes" id="UP000005640">
    <property type="component" value="Chromosome 16"/>
</dbReference>
<dbReference type="RNAct" id="O75506">
    <property type="molecule type" value="protein"/>
</dbReference>
<dbReference type="Bgee" id="ENSG00000230989">
    <property type="expression patterns" value="Expressed in oral cavity and 218 other cell types or tissues"/>
</dbReference>
<dbReference type="ExpressionAtlas" id="O75506">
    <property type="expression patterns" value="baseline and differential"/>
</dbReference>
<dbReference type="GO" id="GO:1904115">
    <property type="term" value="C:axon cytoplasm"/>
    <property type="evidence" value="ECO:0007669"/>
    <property type="project" value="GOC"/>
</dbReference>
<dbReference type="GO" id="GO:0005829">
    <property type="term" value="C:cytosol"/>
    <property type="evidence" value="ECO:0000318"/>
    <property type="project" value="GO_Central"/>
</dbReference>
<dbReference type="GO" id="GO:0005654">
    <property type="term" value="C:nucleoplasm"/>
    <property type="evidence" value="ECO:0000304"/>
    <property type="project" value="Reactome"/>
</dbReference>
<dbReference type="GO" id="GO:0005634">
    <property type="term" value="C:nucleus"/>
    <property type="evidence" value="ECO:0000318"/>
    <property type="project" value="GO_Central"/>
</dbReference>
<dbReference type="GO" id="GO:0042802">
    <property type="term" value="F:identical protein binding"/>
    <property type="evidence" value="ECO:0000353"/>
    <property type="project" value="IntAct"/>
</dbReference>
<dbReference type="GO" id="GO:0003714">
    <property type="term" value="F:transcription corepressor activity"/>
    <property type="evidence" value="ECO:0000304"/>
    <property type="project" value="ProtInc"/>
</dbReference>
<dbReference type="GO" id="GO:0019896">
    <property type="term" value="P:axonal transport of mitochondrion"/>
    <property type="evidence" value="ECO:0000315"/>
    <property type="project" value="ARUK-UCL"/>
</dbReference>
<dbReference type="GO" id="GO:0070370">
    <property type="term" value="P:cellular heat acclimation"/>
    <property type="evidence" value="ECO:0000318"/>
    <property type="project" value="GO_Central"/>
</dbReference>
<dbReference type="GO" id="GO:0035987">
    <property type="term" value="P:endodermal cell differentiation"/>
    <property type="evidence" value="ECO:0007669"/>
    <property type="project" value="Ensembl"/>
</dbReference>
<dbReference type="GO" id="GO:0006936">
    <property type="term" value="P:muscle contraction"/>
    <property type="evidence" value="ECO:0007669"/>
    <property type="project" value="Ensembl"/>
</dbReference>
<dbReference type="GO" id="GO:0000122">
    <property type="term" value="P:negative regulation of transcription by RNA polymerase II"/>
    <property type="evidence" value="ECO:0000304"/>
    <property type="project" value="ProtInc"/>
</dbReference>
<dbReference type="DisProt" id="DP01643"/>
<dbReference type="FunFam" id="1.20.5.430:FF:000002">
    <property type="entry name" value="Heat shock factor-binding protein 1"/>
    <property type="match status" value="1"/>
</dbReference>
<dbReference type="Gene3D" id="1.20.5.430">
    <property type="match status" value="1"/>
</dbReference>
<dbReference type="InterPro" id="IPR009643">
    <property type="entry name" value="HS1-bd"/>
</dbReference>
<dbReference type="PANTHER" id="PTHR19424">
    <property type="entry name" value="HEAT SHOCK FACTOR BINDING PROTEIN 1"/>
    <property type="match status" value="1"/>
</dbReference>
<dbReference type="PANTHER" id="PTHR19424:SF3">
    <property type="entry name" value="HEAT SHOCK FACTOR-BINDING PROTEIN 1"/>
    <property type="match status" value="1"/>
</dbReference>
<dbReference type="Pfam" id="PF06825">
    <property type="entry name" value="HSBP1"/>
    <property type="match status" value="1"/>
</dbReference>